<sequence length="399" mass="44232">MAPKTKSRLVDQPPSASSSEEQELVEESQEEEEQQSREEEGEEESGEETEEDEEPKTAHPVVKKPISQKLVQTPQKPQFSSESGSENGSGSDSEAESGNSLPSPSASDFTVKPNVAAKAATPSKPAAKRPQEAQKEKGKKKPKIAEEEEKKSPATPRSLWSDDDQLALLKGILEYKTVKGMEPSADMSAFHEFIRGKLQAEVSKSQISDKVRRLKKKFLTNVKDGEEPVFKKGQDFLIFEHSKRIWGAPGISNGGVKDNVNNTSNGKAKKTVEVKKSSEPKKSAKVSKPKDDEKQKEEEQQVAVKEVVKEDIVKGDQQDFQSKYPRLAASLETMSGLSTMYPNGSSLLKENMSLIATDKAKVLEEKWKKLEDDEAALMVKRLDFIAEHYRLVVDAMRGN</sequence>
<dbReference type="EMBL" id="AJ314612">
    <property type="protein sequence ID" value="CAC39398.1"/>
    <property type="molecule type" value="mRNA"/>
</dbReference>
<dbReference type="RefSeq" id="NP_001305529.1">
    <property type="nucleotide sequence ID" value="NM_001318600.1"/>
</dbReference>
<dbReference type="SMR" id="Q94IK2"/>
<dbReference type="STRING" id="4113.Q94IK2"/>
<dbReference type="PaxDb" id="4113-PGSC0003DMT400067363"/>
<dbReference type="GeneID" id="102589608"/>
<dbReference type="KEGG" id="sot:102589608"/>
<dbReference type="eggNOG" id="ENOG502RQE9">
    <property type="taxonomic scope" value="Eukaryota"/>
</dbReference>
<dbReference type="InParanoid" id="Q94IK2"/>
<dbReference type="OrthoDB" id="661680at2759"/>
<dbReference type="Proteomes" id="UP000011115">
    <property type="component" value="Unassembled WGS sequence"/>
</dbReference>
<dbReference type="ExpressionAtlas" id="Q94IK2">
    <property type="expression patterns" value="baseline"/>
</dbReference>
<dbReference type="GO" id="GO:0005634">
    <property type="term" value="C:nucleus"/>
    <property type="evidence" value="ECO:0000318"/>
    <property type="project" value="GO_Central"/>
</dbReference>
<dbReference type="GO" id="GO:0006355">
    <property type="term" value="P:regulation of DNA-templated transcription"/>
    <property type="evidence" value="ECO:0007669"/>
    <property type="project" value="InterPro"/>
</dbReference>
<dbReference type="InterPro" id="IPR007592">
    <property type="entry name" value="GEBP"/>
</dbReference>
<dbReference type="InterPro" id="IPR053932">
    <property type="entry name" value="GeBP-like_DBD"/>
</dbReference>
<dbReference type="PANTHER" id="PTHR31662">
    <property type="entry name" value="BNAANNG10740D PROTEIN-RELATED"/>
    <property type="match status" value="1"/>
</dbReference>
<dbReference type="PANTHER" id="PTHR31662:SF33">
    <property type="entry name" value="DNA-BINDING STOREKEEPER PROTEIN TRANSCRIPTIONAL REGULATOR-LIKE PROTEIN"/>
    <property type="match status" value="1"/>
</dbReference>
<dbReference type="Pfam" id="PF04504">
    <property type="entry name" value="GeBP-like_DBD"/>
    <property type="match status" value="1"/>
</dbReference>
<accession>Q94IK2</accession>
<proteinExistence type="evidence at transcript level"/>
<protein>
    <recommendedName>
        <fullName evidence="3">STOREKEEPER protein</fullName>
    </recommendedName>
</protein>
<organism evidence="6">
    <name type="scientific">Solanum tuberosum</name>
    <name type="common">Potato</name>
    <dbReference type="NCBI Taxonomy" id="4113"/>
    <lineage>
        <taxon>Eukaryota</taxon>
        <taxon>Viridiplantae</taxon>
        <taxon>Streptophyta</taxon>
        <taxon>Embryophyta</taxon>
        <taxon>Tracheophyta</taxon>
        <taxon>Spermatophyta</taxon>
        <taxon>Magnoliopsida</taxon>
        <taxon>eudicotyledons</taxon>
        <taxon>Gunneridae</taxon>
        <taxon>Pentapetalae</taxon>
        <taxon>asterids</taxon>
        <taxon>lamiids</taxon>
        <taxon>Solanales</taxon>
        <taxon>Solanaceae</taxon>
        <taxon>Solanoideae</taxon>
        <taxon>Solaneae</taxon>
        <taxon>Solanum</taxon>
    </lineage>
</organism>
<evidence type="ECO:0000256" key="1">
    <source>
        <dbReference type="SAM" id="MobiDB-lite"/>
    </source>
</evidence>
<evidence type="ECO:0000269" key="2">
    <source>
    </source>
</evidence>
<evidence type="ECO:0000303" key="3">
    <source>
    </source>
</evidence>
<evidence type="ECO:0000305" key="4"/>
<evidence type="ECO:0000305" key="5">
    <source>
    </source>
</evidence>
<evidence type="ECO:0000312" key="6">
    <source>
        <dbReference type="EMBL" id="CAC39398.1"/>
    </source>
</evidence>
<gene>
    <name evidence="3" type="primary">STK</name>
</gene>
<name>STK_SOLTU</name>
<keyword id="KW-0539">Nucleus</keyword>
<keyword id="KW-1185">Reference proteome</keyword>
<keyword id="KW-0804">Transcription</keyword>
<keyword id="KW-0805">Transcription regulation</keyword>
<feature type="chain" id="PRO_0000436996" description="STOREKEEPER protein">
    <location>
        <begin position="1"/>
        <end position="399"/>
    </location>
</feature>
<feature type="region of interest" description="Disordered" evidence="1">
    <location>
        <begin position="1"/>
        <end position="160"/>
    </location>
</feature>
<feature type="region of interest" description="Disordered" evidence="1">
    <location>
        <begin position="250"/>
        <end position="301"/>
    </location>
</feature>
<feature type="compositionally biased region" description="Acidic residues" evidence="1">
    <location>
        <begin position="20"/>
        <end position="54"/>
    </location>
</feature>
<feature type="compositionally biased region" description="Polar residues" evidence="1">
    <location>
        <begin position="69"/>
        <end position="79"/>
    </location>
</feature>
<feature type="compositionally biased region" description="Low complexity" evidence="1">
    <location>
        <begin position="80"/>
        <end position="100"/>
    </location>
</feature>
<feature type="compositionally biased region" description="Low complexity" evidence="1">
    <location>
        <begin position="116"/>
        <end position="125"/>
    </location>
</feature>
<feature type="compositionally biased region" description="Basic and acidic residues" evidence="1">
    <location>
        <begin position="143"/>
        <end position="152"/>
    </location>
</feature>
<feature type="compositionally biased region" description="Basic and acidic residues" evidence="1">
    <location>
        <begin position="270"/>
        <end position="299"/>
    </location>
</feature>
<comment type="function">
    <text evidence="2">May act as a transcriptional regulator. Binds specifically to the B-box motif, a promoter element that is required for the tuber-specific and sucrose inducible expression of the patatin gene.</text>
</comment>
<comment type="subcellular location">
    <subcellularLocation>
        <location evidence="5">Nucleus</location>
    </subcellularLocation>
</comment>
<comment type="tissue specificity">
    <text evidence="2">Expressed in tubers and in leaves treated with sucrose.</text>
</comment>
<comment type="developmental stage">
    <text evidence="2">Expressed during the early stages of tuber formation and persists throughout tuber development.</text>
</comment>
<comment type="similarity">
    <text evidence="4">Belongs to the GeBP family.</text>
</comment>
<reference key="1">
    <citation type="journal article" date="2002" name="Plant J.">
        <title>Storekeeper defines a new class of plant-specific DNA-binding proteins and is a putative regulator of patatin expression.</title>
        <authorList>
            <person name="Zourelidou M."/>
            <person name="de Torres-Zabala M."/>
            <person name="Smith C."/>
            <person name="Bevan M.W."/>
        </authorList>
    </citation>
    <scope>NUCLEOTIDE SEQUENCE [MRNA]</scope>
    <scope>FUNCTION</scope>
    <scope>TISSUE SPECIFICITY</scope>
    <scope>DEVELOPMENTAL STAGE</scope>
    <scope>SUBCELLULAR LOCATION</scope>
</reference>